<name>BCHB_HALHL</name>
<protein>
    <recommendedName>
        <fullName evidence="1">Light-independent protochlorophyllide reductase subunit B</fullName>
        <shortName evidence="1">DPOR subunit B</shortName>
        <shortName evidence="1">LI-POR subunit B</shortName>
        <ecNumber evidence="1">1.3.7.7</ecNumber>
    </recommendedName>
</protein>
<gene>
    <name evidence="1" type="primary">bchB</name>
    <name type="ordered locus">Hhal_1636</name>
</gene>
<organism>
    <name type="scientific">Halorhodospira halophila (strain DSM 244 / SL1)</name>
    <name type="common">Ectothiorhodospira halophila (strain DSM 244 / SL1)</name>
    <dbReference type="NCBI Taxonomy" id="349124"/>
    <lineage>
        <taxon>Bacteria</taxon>
        <taxon>Pseudomonadati</taxon>
        <taxon>Pseudomonadota</taxon>
        <taxon>Gammaproteobacteria</taxon>
        <taxon>Chromatiales</taxon>
        <taxon>Ectothiorhodospiraceae</taxon>
        <taxon>Halorhodospira</taxon>
    </lineage>
</organism>
<comment type="function">
    <text evidence="1">Component of the dark-operative protochlorophyllide reductase (DPOR) that uses Mg-ATP and reduced ferredoxin to reduce ring D of protochlorophyllide (Pchlide) to form chlorophyllide a (Chlide). This reaction is light-independent. The NB-protein (BchN-BchB) is the catalytic component of the complex.</text>
</comment>
<comment type="catalytic activity">
    <reaction evidence="1">
        <text>chlorophyllide a + oxidized 2[4Fe-4S]-[ferredoxin] + 2 ADP + 2 phosphate = protochlorophyllide a + reduced 2[4Fe-4S]-[ferredoxin] + 2 ATP + 2 H2O</text>
        <dbReference type="Rhea" id="RHEA:28202"/>
        <dbReference type="Rhea" id="RHEA-COMP:10002"/>
        <dbReference type="Rhea" id="RHEA-COMP:10004"/>
        <dbReference type="ChEBI" id="CHEBI:15377"/>
        <dbReference type="ChEBI" id="CHEBI:30616"/>
        <dbReference type="ChEBI" id="CHEBI:33722"/>
        <dbReference type="ChEBI" id="CHEBI:33723"/>
        <dbReference type="ChEBI" id="CHEBI:43474"/>
        <dbReference type="ChEBI" id="CHEBI:83348"/>
        <dbReference type="ChEBI" id="CHEBI:83350"/>
        <dbReference type="ChEBI" id="CHEBI:456216"/>
        <dbReference type="EC" id="1.3.7.7"/>
    </reaction>
</comment>
<comment type="cofactor">
    <cofactor evidence="1">
        <name>[4Fe-4S] cluster</name>
        <dbReference type="ChEBI" id="CHEBI:49883"/>
    </cofactor>
    <text evidence="1">Binds 1 [4Fe-4S] cluster per heterodimer. The cluster is bound at the heterodimer interface by residues from both subunits.</text>
</comment>
<comment type="pathway">
    <text evidence="1">Porphyrin-containing compound metabolism; bacteriochlorophyll biosynthesis (light-independent).</text>
</comment>
<comment type="subunit">
    <text evidence="1">Protochlorophyllide reductase is composed of three subunits; BchL, BchN and BchB. Forms a heterotetramer of two BchB and two BchN subunits.</text>
</comment>
<comment type="similarity">
    <text evidence="1">Belongs to the ChlB/BchB/BchZ family.</text>
</comment>
<dbReference type="EC" id="1.3.7.7" evidence="1"/>
<dbReference type="EMBL" id="CP000544">
    <property type="protein sequence ID" value="ABM62400.1"/>
    <property type="molecule type" value="Genomic_DNA"/>
</dbReference>
<dbReference type="RefSeq" id="WP_011814422.1">
    <property type="nucleotide sequence ID" value="NC_008789.1"/>
</dbReference>
<dbReference type="SMR" id="A1WXI8"/>
<dbReference type="STRING" id="349124.Hhal_1636"/>
<dbReference type="KEGG" id="hha:Hhal_1636"/>
<dbReference type="eggNOG" id="COG2710">
    <property type="taxonomic scope" value="Bacteria"/>
</dbReference>
<dbReference type="HOGENOM" id="CLU_025470_0_0_6"/>
<dbReference type="OrthoDB" id="5717231at2"/>
<dbReference type="UniPathway" id="UPA00671"/>
<dbReference type="Proteomes" id="UP000000647">
    <property type="component" value="Chromosome"/>
</dbReference>
<dbReference type="GO" id="GO:0051539">
    <property type="term" value="F:4 iron, 4 sulfur cluster binding"/>
    <property type="evidence" value="ECO:0007669"/>
    <property type="project" value="UniProtKB-UniRule"/>
</dbReference>
<dbReference type="GO" id="GO:0005524">
    <property type="term" value="F:ATP binding"/>
    <property type="evidence" value="ECO:0007669"/>
    <property type="project" value="UniProtKB-UniRule"/>
</dbReference>
<dbReference type="GO" id="GO:0046872">
    <property type="term" value="F:metal ion binding"/>
    <property type="evidence" value="ECO:0007669"/>
    <property type="project" value="UniProtKB-KW"/>
</dbReference>
<dbReference type="GO" id="GO:0016730">
    <property type="term" value="F:oxidoreductase activity, acting on iron-sulfur proteins as donors"/>
    <property type="evidence" value="ECO:0007669"/>
    <property type="project" value="InterPro"/>
</dbReference>
<dbReference type="GO" id="GO:0016636">
    <property type="term" value="F:oxidoreductase activity, acting on the CH-CH group of donors, iron-sulfur protein as acceptor"/>
    <property type="evidence" value="ECO:0007669"/>
    <property type="project" value="UniProtKB-UniRule"/>
</dbReference>
<dbReference type="GO" id="GO:0036070">
    <property type="term" value="P:light-independent bacteriochlorophyll biosynthetic process"/>
    <property type="evidence" value="ECO:0007669"/>
    <property type="project" value="UniProtKB-UniRule"/>
</dbReference>
<dbReference type="GO" id="GO:0019685">
    <property type="term" value="P:photosynthesis, dark reaction"/>
    <property type="evidence" value="ECO:0007669"/>
    <property type="project" value="InterPro"/>
</dbReference>
<dbReference type="Gene3D" id="1.20.89.20">
    <property type="match status" value="1"/>
</dbReference>
<dbReference type="Gene3D" id="3.40.50.1980">
    <property type="entry name" value="Nitrogenase molybdenum iron protein domain"/>
    <property type="match status" value="3"/>
</dbReference>
<dbReference type="Gene3D" id="1.10.8.550">
    <property type="entry name" value="Proto-chlorophyllide reductase 57 kD subunit B"/>
    <property type="match status" value="1"/>
</dbReference>
<dbReference type="HAMAP" id="MF_00353">
    <property type="entry name" value="ChlB_BchB"/>
    <property type="match status" value="1"/>
</dbReference>
<dbReference type="InterPro" id="IPR050152">
    <property type="entry name" value="ChlB/BchB/BchZ"/>
</dbReference>
<dbReference type="InterPro" id="IPR013580">
    <property type="entry name" value="LI-POR_suB-like_C"/>
</dbReference>
<dbReference type="InterPro" id="IPR000510">
    <property type="entry name" value="Nase/OxRdtase_comp1"/>
</dbReference>
<dbReference type="InterPro" id="IPR042298">
    <property type="entry name" value="P-CP_red_C"/>
</dbReference>
<dbReference type="InterPro" id="IPR005969">
    <property type="entry name" value="Protochl_reductB"/>
</dbReference>
<dbReference type="InterPro" id="IPR016209">
    <property type="entry name" value="Protochlorophyllide_Rdtase"/>
</dbReference>
<dbReference type="NCBIfam" id="TIGR01278">
    <property type="entry name" value="DPOR_BchB"/>
    <property type="match status" value="1"/>
</dbReference>
<dbReference type="PANTHER" id="PTHR33712">
    <property type="entry name" value="LIGHT-INDEPENDENT PROTOCHLOROPHYLLIDE REDUCTASE SUBUNIT B"/>
    <property type="match status" value="1"/>
</dbReference>
<dbReference type="PANTHER" id="PTHR33712:SF7">
    <property type="entry name" value="LIGHT-INDEPENDENT PROTOCHLOROPHYLLIDE REDUCTASE SUBUNIT B"/>
    <property type="match status" value="1"/>
</dbReference>
<dbReference type="Pfam" id="PF00148">
    <property type="entry name" value="Oxidored_nitro"/>
    <property type="match status" value="1"/>
</dbReference>
<dbReference type="Pfam" id="PF08369">
    <property type="entry name" value="PCP_red"/>
    <property type="match status" value="1"/>
</dbReference>
<dbReference type="PIRSF" id="PIRSF000163">
    <property type="entry name" value="PCP_ChlB"/>
    <property type="match status" value="1"/>
</dbReference>
<dbReference type="SUPFAM" id="SSF53807">
    <property type="entry name" value="Helical backbone' metal receptor"/>
    <property type="match status" value="1"/>
</dbReference>
<reference key="1">
    <citation type="submission" date="2006-12" db="EMBL/GenBank/DDBJ databases">
        <title>Complete sequence of Halorhodospira halophila SL1.</title>
        <authorList>
            <consortium name="US DOE Joint Genome Institute"/>
            <person name="Copeland A."/>
            <person name="Lucas S."/>
            <person name="Lapidus A."/>
            <person name="Barry K."/>
            <person name="Detter J.C."/>
            <person name="Glavina del Rio T."/>
            <person name="Hammon N."/>
            <person name="Israni S."/>
            <person name="Dalin E."/>
            <person name="Tice H."/>
            <person name="Pitluck S."/>
            <person name="Saunders E."/>
            <person name="Brettin T."/>
            <person name="Bruce D."/>
            <person name="Han C."/>
            <person name="Tapia R."/>
            <person name="Schmutz J."/>
            <person name="Larimer F."/>
            <person name="Land M."/>
            <person name="Hauser L."/>
            <person name="Kyrpides N."/>
            <person name="Mikhailova N."/>
            <person name="Hoff W."/>
            <person name="Richardson P."/>
        </authorList>
    </citation>
    <scope>NUCLEOTIDE SEQUENCE [LARGE SCALE GENOMIC DNA]</scope>
    <source>
        <strain>DSM 244 / SL1</strain>
    </source>
</reference>
<accession>A1WXI8</accession>
<sequence length="526" mass="57164">MQLTLWTYEGPPHVGAMRIAASMKGVHCVLHAPQGDTYADLLFTMIERRPGRPPVSYSTFNARHLGRDTAELVRETVTAAYERYQPEALLVGDSCTAELLQDQPGDLAQGMDLPVPVIGLELSAYSRKEGYGASEAFYQLVRGLLETNGASAGAQPDASRAPRANLLGPTSLGFRCRDDVQEVTRLLESVGVEVNVVAPLGASPEDLRRIPEADFNVCLYPEVARSTCEWLQRRFGQPTVTTVPLGLGATRDFLAEVGRVTGLDVSQGVADANARMAWYSRSVDSNYLTGKRVFIFGDGTHAVAAARIASEELGFEVVGLGTYAREEAREVRRAAKAYGVEPLITDDYLEVERAATEASPELVLGTQMERHIAKRLGVPCAVISAPVHVQDFPARYAPNMGLEGANVIFDTWVHPLMMGLEEHLLGMFKEDFEFTADAPSHLEAGAAPSPGGAAREEGQAETAVAVAESEEGAEVRWTPEAEAELKKIPFFVRGKARRNTERFAADRGIATITVETIYDAKAHFSR</sequence>
<proteinExistence type="inferred from homology"/>
<keyword id="KW-0004">4Fe-4S</keyword>
<keyword id="KW-0067">ATP-binding</keyword>
<keyword id="KW-0077">Bacteriochlorophyll biosynthesis</keyword>
<keyword id="KW-0149">Chlorophyll biosynthesis</keyword>
<keyword id="KW-0408">Iron</keyword>
<keyword id="KW-0411">Iron-sulfur</keyword>
<keyword id="KW-0479">Metal-binding</keyword>
<keyword id="KW-0547">Nucleotide-binding</keyword>
<keyword id="KW-0560">Oxidoreductase</keyword>
<keyword id="KW-0602">Photosynthesis</keyword>
<keyword id="KW-1185">Reference proteome</keyword>
<evidence type="ECO:0000255" key="1">
    <source>
        <dbReference type="HAMAP-Rule" id="MF_00353"/>
    </source>
</evidence>
<feature type="chain" id="PRO_1000048403" description="Light-independent protochlorophyllide reductase subunit B">
    <location>
        <begin position="1"/>
        <end position="526"/>
    </location>
</feature>
<feature type="active site" description="Proton donor" evidence="1">
    <location>
        <position position="284"/>
    </location>
</feature>
<feature type="binding site" evidence="1">
    <location>
        <position position="36"/>
    </location>
    <ligand>
        <name>[4Fe-4S] cluster</name>
        <dbReference type="ChEBI" id="CHEBI:49883"/>
        <note>ligand shared with heterodimeric partner</note>
    </ligand>
</feature>
<feature type="binding site" evidence="1">
    <location>
        <begin position="419"/>
        <end position="420"/>
    </location>
    <ligand>
        <name>substrate</name>
    </ligand>
</feature>